<sequence length="118" mass="13703">MPRPPKWRWVRSEPNVTYFKPVGIPLSMLEEVILTVEELEAIRLKDLEGLEQEECADMMKVSRPTFFRIITSARQKIADALVNGKAIRVEGGNYKVYGEDMRGHGGMRHRHGWYNEED</sequence>
<evidence type="ECO:0000305" key="1"/>
<reference key="1">
    <citation type="journal article" date="2002" name="Genome Res.">
        <title>A complete sequence of the T. tengcongensis genome.</title>
        <authorList>
            <person name="Bao Q."/>
            <person name="Tian Y."/>
            <person name="Li W."/>
            <person name="Xu Z."/>
            <person name="Xuan Z."/>
            <person name="Hu S."/>
            <person name="Dong W."/>
            <person name="Yang J."/>
            <person name="Chen Y."/>
            <person name="Xue Y."/>
            <person name="Xu Y."/>
            <person name="Lai X."/>
            <person name="Huang L."/>
            <person name="Dong X."/>
            <person name="Ma Y."/>
            <person name="Ling L."/>
            <person name="Tan H."/>
            <person name="Chen R."/>
            <person name="Wang J."/>
            <person name="Yu J."/>
            <person name="Yang H."/>
        </authorList>
    </citation>
    <scope>NUCLEOTIDE SEQUENCE [LARGE SCALE GENOMIC DNA]</scope>
    <source>
        <strain>DSM 15242 / JCM 11007 / NBRC 100824 / MB4</strain>
    </source>
</reference>
<protein>
    <recommendedName>
        <fullName>UPF0251 protein TTE1845</fullName>
    </recommendedName>
</protein>
<name>Y1845_CALS4</name>
<accession>Q8R8Y7</accession>
<feature type="chain" id="PRO_0000147591" description="UPF0251 protein TTE1845">
    <location>
        <begin position="1"/>
        <end position="118"/>
    </location>
</feature>
<gene>
    <name type="ordered locus">TTE1845</name>
</gene>
<keyword id="KW-1185">Reference proteome</keyword>
<dbReference type="EMBL" id="AE008691">
    <property type="protein sequence ID" value="AAM25036.1"/>
    <property type="molecule type" value="Genomic_DNA"/>
</dbReference>
<dbReference type="RefSeq" id="WP_011026022.1">
    <property type="nucleotide sequence ID" value="NC_003869.1"/>
</dbReference>
<dbReference type="STRING" id="273068.TTE1845"/>
<dbReference type="KEGG" id="tte:TTE1845"/>
<dbReference type="eggNOG" id="COG1342">
    <property type="taxonomic scope" value="Bacteria"/>
</dbReference>
<dbReference type="HOGENOM" id="CLU_094511_1_0_9"/>
<dbReference type="OrthoDB" id="280278at2"/>
<dbReference type="Proteomes" id="UP000000555">
    <property type="component" value="Chromosome"/>
</dbReference>
<dbReference type="Gene3D" id="1.10.10.10">
    <property type="entry name" value="Winged helix-like DNA-binding domain superfamily/Winged helix DNA-binding domain"/>
    <property type="match status" value="1"/>
</dbReference>
<dbReference type="HAMAP" id="MF_00674">
    <property type="entry name" value="UPF0251"/>
    <property type="match status" value="1"/>
</dbReference>
<dbReference type="InterPro" id="IPR013324">
    <property type="entry name" value="RNA_pol_sigma_r3/r4-like"/>
</dbReference>
<dbReference type="InterPro" id="IPR002852">
    <property type="entry name" value="UPF0251"/>
</dbReference>
<dbReference type="InterPro" id="IPR036388">
    <property type="entry name" value="WH-like_DNA-bd_sf"/>
</dbReference>
<dbReference type="PANTHER" id="PTHR37478">
    <property type="match status" value="1"/>
</dbReference>
<dbReference type="PANTHER" id="PTHR37478:SF2">
    <property type="entry name" value="UPF0251 PROTEIN TK0562"/>
    <property type="match status" value="1"/>
</dbReference>
<dbReference type="Pfam" id="PF02001">
    <property type="entry name" value="DUF134"/>
    <property type="match status" value="1"/>
</dbReference>
<dbReference type="SUPFAM" id="SSF88659">
    <property type="entry name" value="Sigma3 and sigma4 domains of RNA polymerase sigma factors"/>
    <property type="match status" value="1"/>
</dbReference>
<comment type="similarity">
    <text evidence="1">Belongs to the UPF0251 family.</text>
</comment>
<organism>
    <name type="scientific">Caldanaerobacter subterraneus subsp. tengcongensis (strain DSM 15242 / JCM 11007 / NBRC 100824 / MB4)</name>
    <name type="common">Thermoanaerobacter tengcongensis</name>
    <dbReference type="NCBI Taxonomy" id="273068"/>
    <lineage>
        <taxon>Bacteria</taxon>
        <taxon>Bacillati</taxon>
        <taxon>Bacillota</taxon>
        <taxon>Clostridia</taxon>
        <taxon>Thermoanaerobacterales</taxon>
        <taxon>Thermoanaerobacteraceae</taxon>
        <taxon>Caldanaerobacter</taxon>
    </lineage>
</organism>
<proteinExistence type="inferred from homology"/>